<accession>P85125</accession>
<comment type="function">
    <text evidence="1">Plays an important role in caveolae formation and organization. Essential for the formation of caveolae in all tissues. Core component of the CAVIN complex which is essential for recruitment of the complex to the caveolae in presence of calveolin-1 (CAV1). Essential for normal oligomerization of CAV1. Promotes ribosomal transcriptional activity in response to metabolic challenges in the adipocytes and plays an important role in the formation of the ribosomal transcriptional loop. Dissociates transcription complexes paused by DNA-bound TTF1, thereby releasing both RNA polymerase I and pre-RNA from the template. The caveolae biogenesis pathway is required for the secretion of proteins such as GASK1A.</text>
</comment>
<comment type="subunit">
    <text evidence="1 2">Component of the CAVIN complex composed of CAVIN1, CAVIN2, CAVIN3 and CAVIN4. Interacts with RNA polymerase I subunit POLR1A/RPA1 and TTF1. Binds the 3' end of pre-rRNA. Interacts with transcription factor ZNF148. Interacts with LIPE in the adipocyte cytoplasm. Interacts with CAV1, CAV3, CAVIN2, CAVIN3 and CAVIN4.</text>
</comment>
<comment type="subcellular location">
    <subcellularLocation>
        <location evidence="5 6 7 8">Membrane</location>
        <location evidence="5 6 7 8">Caveola</location>
    </subcellularLocation>
    <subcellularLocation>
        <location evidence="5 6 7 8">Cell membrane</location>
    </subcellularLocation>
    <subcellularLocation>
        <location evidence="5 7">Microsome</location>
    </subcellularLocation>
    <subcellularLocation>
        <location evidence="9">Endoplasmic reticulum</location>
    </subcellularLocation>
    <subcellularLocation>
        <location evidence="6">Cytoplasm</location>
        <location evidence="6">Cytosol</location>
    </subcellularLocation>
    <subcellularLocation>
        <location evidence="2">Mitochondrion</location>
    </subcellularLocation>
    <subcellularLocation>
        <location evidence="6 7">Nucleus</location>
    </subcellularLocation>
    <text evidence="1 2 8">Translocates to the cytoplasm from the caveolae upon insulin stimulation (By similarity). Colocalizes with CAV1 in lipid rafts in adipocytes (PubMed:18056712). Localizes in the caveolae in a caveolin-dependent manner (By similarity).</text>
</comment>
<comment type="tissue specificity">
    <text evidence="5 6 7">Expressed in the adipocyte (at protein level). Expressed in all striated and smooth muscles tested including diaphragm, esophageal striated muscle, fibroblast, endocardial endothelium, epicardial mesothelium, intestinal smooth muscle, masseter, soleus muscle, vascular smooth muscle and white gastrocnemius muscle (at protein level). Expressed in the endothelium and perineural sheath (at protein level). Not expressed in hepatocytes.</text>
</comment>
<comment type="domain">
    <text evidence="1">The leucine-zipper domain 1 is essential for its localization in the caveolae.</text>
</comment>
<comment type="PTM">
    <text evidence="1">Phosphorylated. Present in active and inactive forms. Changes in phosphorylation pattern may alter activity. Phosphorylation at Tyr-158 is essential for its function in the regulation of ribosomal transcriptional activity.</text>
</comment>
<comment type="PTM">
    <text evidence="1">Monoubiquitinated.</text>
</comment>
<comment type="similarity">
    <text evidence="9">Belongs to the CAVIN family.</text>
</comment>
<proteinExistence type="evidence at protein level"/>
<feature type="chain" id="PRO_0000284698" description="Caveolae-associated protein 1">
    <location>
        <begin position="1"/>
        <end position="392"/>
    </location>
</feature>
<feature type="region of interest" description="Required for homotrimerization and for interaction with CAVIN2 and CAVIN3" evidence="1">
    <location>
        <begin position="1"/>
        <end position="100"/>
    </location>
</feature>
<feature type="region of interest" description="Disordered" evidence="4">
    <location>
        <begin position="1"/>
        <end position="45"/>
    </location>
</feature>
<feature type="region of interest" description="Nuclear export signal" evidence="1">
    <location>
        <begin position="54"/>
        <end position="64"/>
    </location>
</feature>
<feature type="region of interest" description="Leucine-zipper 1" evidence="1">
    <location>
        <begin position="55"/>
        <end position="77"/>
    </location>
</feature>
<feature type="region of interest" description="Nuclear localization signal" evidence="1">
    <location>
        <begin position="138"/>
        <end position="154"/>
    </location>
</feature>
<feature type="region of interest" description="Leucine-zipper 2" evidence="1">
    <location>
        <begin position="168"/>
        <end position="188"/>
    </location>
</feature>
<feature type="region of interest" description="Disordered" evidence="4">
    <location>
        <begin position="173"/>
        <end position="198"/>
    </location>
</feature>
<feature type="region of interest" description="Nuclear localization signal" evidence="1">
    <location>
        <begin position="235"/>
        <end position="251"/>
    </location>
</feature>
<feature type="region of interest" description="Leucine-zipper 3" evidence="1">
    <location>
        <begin position="259"/>
        <end position="299"/>
    </location>
</feature>
<feature type="region of interest" description="Disordered" evidence="4">
    <location>
        <begin position="347"/>
        <end position="367"/>
    </location>
</feature>
<feature type="coiled-coil region" evidence="3">
    <location>
        <begin position="201"/>
        <end position="284"/>
    </location>
</feature>
<feature type="compositionally biased region" description="Basic and acidic residues" evidence="4">
    <location>
        <begin position="1"/>
        <end position="10"/>
    </location>
</feature>
<feature type="compositionally biased region" description="Basic and acidic residues" evidence="4">
    <location>
        <begin position="173"/>
        <end position="183"/>
    </location>
</feature>
<feature type="compositionally biased region" description="Acidic residues" evidence="4">
    <location>
        <begin position="184"/>
        <end position="198"/>
    </location>
</feature>
<feature type="compositionally biased region" description="Basic and acidic residues" evidence="4">
    <location>
        <begin position="354"/>
        <end position="363"/>
    </location>
</feature>
<feature type="modified residue" description="N-acetylmethionine" evidence="2">
    <location>
        <position position="1"/>
    </location>
</feature>
<feature type="modified residue" description="Phosphoserine" evidence="11">
    <location>
        <position position="21"/>
    </location>
</feature>
<feature type="modified residue" description="Phosphoserine" evidence="11">
    <location>
        <position position="38"/>
    </location>
</feature>
<feature type="modified residue" description="Phosphothreonine" evidence="11">
    <location>
        <position position="40"/>
    </location>
</feature>
<feature type="modified residue" description="Phosphoserine" evidence="11">
    <location>
        <position position="42"/>
    </location>
</feature>
<feature type="modified residue" description="Phosphoserine" evidence="11">
    <location>
        <position position="48"/>
    </location>
</feature>
<feature type="modified residue" description="Phosphoserine" evidence="11">
    <location>
        <position position="120"/>
    </location>
</feature>
<feature type="modified residue" description="Phosphotyrosine" evidence="11">
    <location>
        <position position="158"/>
    </location>
</feature>
<feature type="modified residue" description="Phosphoserine" evidence="11">
    <location>
        <position position="169"/>
    </location>
</feature>
<feature type="modified residue" description="Phosphoserine" evidence="2">
    <location>
        <position position="171"/>
    </location>
</feature>
<feature type="modified residue" description="Phosphoserine" evidence="11">
    <location>
        <position position="173"/>
    </location>
</feature>
<feature type="modified residue" description="Phosphoserine" evidence="11">
    <location>
        <position position="177"/>
    </location>
</feature>
<feature type="modified residue" description="Phosphoserine" evidence="11">
    <location>
        <position position="204"/>
    </location>
</feature>
<feature type="modified residue" description="Phosphoserine" evidence="11">
    <location>
        <position position="205"/>
    </location>
</feature>
<feature type="modified residue" description="Phosphoserine" evidence="2">
    <location>
        <position position="302"/>
    </location>
</feature>
<feature type="modified residue" description="Phosphothreonine" evidence="11">
    <location>
        <position position="304"/>
    </location>
</feature>
<feature type="modified residue" description="Phosphotyrosine" evidence="11">
    <location>
        <position position="310"/>
    </location>
</feature>
<feature type="modified residue" description="Phosphoserine" evidence="11">
    <location>
        <position position="367"/>
    </location>
</feature>
<feature type="modified residue" description="Phosphoserine" evidence="11">
    <location>
        <position position="368"/>
    </location>
</feature>
<feature type="modified residue" description="Phosphoserine" evidence="11">
    <location>
        <position position="381"/>
    </location>
</feature>
<feature type="modified residue" description="Phosphoserine" evidence="11">
    <location>
        <position position="389"/>
    </location>
</feature>
<feature type="modified residue" description="Phosphoserine" evidence="11">
    <location>
        <position position="391"/>
    </location>
</feature>
<feature type="cross-link" description="Glycyl lysine isopeptide (Lys-Gly) (interchain with G-Cter in SUMO2)" evidence="2">
    <location>
        <position position="118"/>
    </location>
</feature>
<feature type="cross-link" description="Glycyl lysine isopeptide (Lys-Gly) (interchain with G-Cter in SUMO2)" evidence="2">
    <location>
        <position position="124"/>
    </location>
</feature>
<feature type="cross-link" description="Glycyl lysine isopeptide (Lys-Gly) (interchain with G-Cter in SUMO1); alternate" evidence="2">
    <location>
        <position position="163"/>
    </location>
</feature>
<feature type="cross-link" description="Glycyl lysine isopeptide (Lys-Gly) (interchain with G-Cter in SUMO2); alternate" evidence="2">
    <location>
        <position position="163"/>
    </location>
</feature>
<feature type="cross-link" description="Glycyl lysine isopeptide (Lys-Gly) (interchain with G-Cter in SUMO2)" evidence="2">
    <location>
        <position position="167"/>
    </location>
</feature>
<feature type="cross-link" description="Glycyl lysine isopeptide (Lys-Gly) (interchain with G-Cter in SUMO2)" evidence="2">
    <location>
        <position position="172"/>
    </location>
</feature>
<feature type="cross-link" description="Glycyl lysine isopeptide (Lys-Gly) (interchain with G-Cter in SUMO2)" evidence="2">
    <location>
        <position position="328"/>
    </location>
</feature>
<sequence>MEDVTLHIVERPYSGYPDASSEGPEPTPGEARATEEPSGTGSDELIKSDQVNGVLVLSLLDKIIGAVDQIQLTQAQLEERQAEMEGAVQSIQGELSKLGKAHATTSNTVSKLLEKVRKVSVNVKTVRGSLERQAGQIKKLEVNEAELLRRRNFKVMIYQDEVKLPAKLSVSKSLKESEALPEKEGDELGEGERPEEDAAAIELSSDEAVEVEEVIEESRAERIKRSGLRRVDDFKKAFSKEKMEKTKVRTRENLEKTRLKTKENLEKTRHTLEKRMNKLGTRLVPVERREKLKTSRDKLRKSFTPDHVVYARSKTAVYKVPPFTFHVKKIREGEVEVLKATEMVEVGPDDDEVGAERGAETDLLRGSSPDVHTLLEITEESDAVLVDKSDSD</sequence>
<gene>
    <name evidence="10" type="primary">Cavin1</name>
    <name type="synonym">Ptrf</name>
</gene>
<name>CAVN1_RAT</name>
<dbReference type="SMR" id="P85125"/>
<dbReference type="FunCoup" id="P85125">
    <property type="interactions" value="384"/>
</dbReference>
<dbReference type="IntAct" id="P85125">
    <property type="interactions" value="1"/>
</dbReference>
<dbReference type="STRING" id="10116.ENSRNOP00000026783"/>
<dbReference type="CarbonylDB" id="P85125"/>
<dbReference type="GlyGen" id="P85125">
    <property type="glycosylation" value="1 site"/>
</dbReference>
<dbReference type="iPTMnet" id="P85125"/>
<dbReference type="PhosphoSitePlus" id="P85125"/>
<dbReference type="PaxDb" id="10116-ENSRNOP00000026783"/>
<dbReference type="UCSC" id="RGD:1307685">
    <property type="organism name" value="rat"/>
</dbReference>
<dbReference type="AGR" id="RGD:1307685"/>
<dbReference type="RGD" id="1307685">
    <property type="gene designation" value="Cavin1"/>
</dbReference>
<dbReference type="eggNOG" id="ENOG502QV3D">
    <property type="taxonomic scope" value="Eukaryota"/>
</dbReference>
<dbReference type="InParanoid" id="P85125"/>
<dbReference type="PhylomeDB" id="P85125"/>
<dbReference type="Reactome" id="R-RNO-73863">
    <property type="pathway name" value="RNA Polymerase I Transcription Termination"/>
</dbReference>
<dbReference type="Reactome" id="R-RNO-8980692">
    <property type="pathway name" value="RHOA GTPase cycle"/>
</dbReference>
<dbReference type="Reactome" id="R-RNO-9013026">
    <property type="pathway name" value="RHOB GTPase cycle"/>
</dbReference>
<dbReference type="PRO" id="PR:P85125"/>
<dbReference type="Proteomes" id="UP000002494">
    <property type="component" value="Unplaced"/>
</dbReference>
<dbReference type="GO" id="GO:0005901">
    <property type="term" value="C:caveola"/>
    <property type="evidence" value="ECO:0000314"/>
    <property type="project" value="UniProtKB"/>
</dbReference>
<dbReference type="GO" id="GO:0005737">
    <property type="term" value="C:cytoplasm"/>
    <property type="evidence" value="ECO:0000250"/>
    <property type="project" value="UniProtKB"/>
</dbReference>
<dbReference type="GO" id="GO:0005829">
    <property type="term" value="C:cytosol"/>
    <property type="evidence" value="ECO:0007669"/>
    <property type="project" value="UniProtKB-SubCell"/>
</dbReference>
<dbReference type="GO" id="GO:0005783">
    <property type="term" value="C:endoplasmic reticulum"/>
    <property type="evidence" value="ECO:0000266"/>
    <property type="project" value="RGD"/>
</dbReference>
<dbReference type="GO" id="GO:0045121">
    <property type="term" value="C:membrane raft"/>
    <property type="evidence" value="ECO:0000266"/>
    <property type="project" value="RGD"/>
</dbReference>
<dbReference type="GO" id="GO:0005739">
    <property type="term" value="C:mitochondrion"/>
    <property type="evidence" value="ECO:0000250"/>
    <property type="project" value="UniProtKB"/>
</dbReference>
<dbReference type="GO" id="GO:0005634">
    <property type="term" value="C:nucleus"/>
    <property type="evidence" value="ECO:0000250"/>
    <property type="project" value="UniProtKB"/>
</dbReference>
<dbReference type="GO" id="GO:0032991">
    <property type="term" value="C:protein-containing complex"/>
    <property type="evidence" value="ECO:0000266"/>
    <property type="project" value="RGD"/>
</dbReference>
<dbReference type="GO" id="GO:0042802">
    <property type="term" value="F:identical protein binding"/>
    <property type="evidence" value="ECO:0000266"/>
    <property type="project" value="RGD"/>
</dbReference>
<dbReference type="GO" id="GO:0042134">
    <property type="term" value="F:rRNA primary transcript binding"/>
    <property type="evidence" value="ECO:0000250"/>
    <property type="project" value="UniProtKB"/>
</dbReference>
<dbReference type="GO" id="GO:2000147">
    <property type="term" value="P:positive regulation of cell motility"/>
    <property type="evidence" value="ECO:0000250"/>
    <property type="project" value="UniProtKB"/>
</dbReference>
<dbReference type="GO" id="GO:0009306">
    <property type="term" value="P:protein secretion"/>
    <property type="evidence" value="ECO:0000266"/>
    <property type="project" value="RGD"/>
</dbReference>
<dbReference type="GO" id="GO:0009303">
    <property type="term" value="P:rRNA transcription"/>
    <property type="evidence" value="ECO:0000250"/>
    <property type="project" value="UniProtKB"/>
</dbReference>
<dbReference type="GO" id="GO:0006363">
    <property type="term" value="P:termination of RNA polymerase I transcription"/>
    <property type="evidence" value="ECO:0000250"/>
    <property type="project" value="UniProtKB"/>
</dbReference>
<dbReference type="GO" id="GO:0006361">
    <property type="term" value="P:transcription initiation at RNA polymerase I promoter"/>
    <property type="evidence" value="ECO:0000250"/>
    <property type="project" value="UniProtKB"/>
</dbReference>
<dbReference type="InterPro" id="IPR026752">
    <property type="entry name" value="Cavin_fam"/>
</dbReference>
<dbReference type="PANTHER" id="PTHR15240:SF3">
    <property type="entry name" value="CAVEOLAE-ASSOCIATED PROTEIN 1"/>
    <property type="match status" value="1"/>
</dbReference>
<dbReference type="PANTHER" id="PTHR15240">
    <property type="entry name" value="CAVIN"/>
    <property type="match status" value="1"/>
</dbReference>
<dbReference type="Pfam" id="PF15237">
    <property type="entry name" value="PTRF_SDPR"/>
    <property type="match status" value="1"/>
</dbReference>
<reference evidence="9" key="1">
    <citation type="journal article" date="2005" name="Biochim. Biophys. Acta">
        <title>Identification of a major protein on the cytosolic face of caveolae.</title>
        <authorList>
            <person name="Vinten J."/>
            <person name="Johnsen A.H."/>
            <person name="Roepstorff P."/>
            <person name="Harpoth J."/>
            <person name="Tranum-Jensen J."/>
        </authorList>
    </citation>
    <scope>NUCLEOTIDE SEQUENCE [MRNA]</scope>
    <scope>PROTEIN SEQUENCE OF 31-100 AND 340-357</scope>
    <scope>SUBCELLULAR LOCATION</scope>
    <scope>TISSUE SPECIFICITY</scope>
</reference>
<reference evidence="9" key="2">
    <citation type="journal article" date="2001" name="Cell Tissue Res.">
        <title>A 60-kDa protein abundant in adipocyte caveolae.</title>
        <authorList>
            <person name="Vinten J."/>
            <person name="Voldstedlund M."/>
            <person name="Clausen H."/>
            <person name="Christiansen K."/>
            <person name="Carlsen J."/>
            <person name="Tranum-Jensen J."/>
        </authorList>
    </citation>
    <scope>SUBCELLULAR LOCATION</scope>
    <scope>TISSUE SPECIFICITY</scope>
</reference>
<reference evidence="9" key="3">
    <citation type="journal article" date="2001" name="Cell Tissue Res.">
        <title>cav-p60 expression in rat muscle tissues. Distribution of caveolar proteins.</title>
        <authorList>
            <person name="Voldstedlund M."/>
            <person name="Vinten J."/>
            <person name="Tranum-Jensen J."/>
        </authorList>
    </citation>
    <scope>SUBCELLULAR LOCATION</scope>
    <scope>TISSUE SPECIFICITY</scope>
</reference>
<reference key="4">
    <citation type="journal article" date="2008" name="J. Biol. Chem.">
        <title>A critical role of cavin (polymerase I and transcript release factor) in caveolae formation and organization.</title>
        <authorList>
            <person name="Liu L."/>
            <person name="Pilch P.F."/>
        </authorList>
    </citation>
    <scope>SUBCELLULAR LOCATION</scope>
</reference>
<reference key="5">
    <citation type="journal article" date="2012" name="Nat. Commun.">
        <title>Quantitative maps of protein phosphorylation sites across 14 different rat organs and tissues.</title>
        <authorList>
            <person name="Lundby A."/>
            <person name="Secher A."/>
            <person name="Lage K."/>
            <person name="Nordsborg N.B."/>
            <person name="Dmytriyev A."/>
            <person name="Lundby C."/>
            <person name="Olsen J.V."/>
        </authorList>
    </citation>
    <scope>PHOSPHORYLATION [LARGE SCALE ANALYSIS] AT SER-21; SER-38; THR-40; SER-42; SER-48; SER-120; TYR-158; SER-169; SER-173; SER-177; SER-204; SER-205; THR-304; TYR-310; SER-367; SER-368; SER-381; SER-389 AND SER-391</scope>
    <scope>IDENTIFICATION BY MASS SPECTROMETRY [LARGE SCALE ANALYSIS]</scope>
</reference>
<protein>
    <recommendedName>
        <fullName evidence="10">Caveolae-associated protein 1</fullName>
    </recommendedName>
    <alternativeName>
        <fullName>Cavin-1</fullName>
    </alternativeName>
    <alternativeName>
        <fullName>Polymerase I and transcript release factor</fullName>
    </alternativeName>
    <alternativeName>
        <fullName>cav-p60</fullName>
    </alternativeName>
</protein>
<evidence type="ECO:0000250" key="1">
    <source>
        <dbReference type="UniProtKB" id="O54724"/>
    </source>
</evidence>
<evidence type="ECO:0000250" key="2">
    <source>
        <dbReference type="UniProtKB" id="Q6NZI2"/>
    </source>
</evidence>
<evidence type="ECO:0000255" key="3"/>
<evidence type="ECO:0000256" key="4">
    <source>
        <dbReference type="SAM" id="MobiDB-lite"/>
    </source>
</evidence>
<evidence type="ECO:0000269" key="5">
    <source>
    </source>
</evidence>
<evidence type="ECO:0000269" key="6">
    <source>
    </source>
</evidence>
<evidence type="ECO:0000269" key="7">
    <source>
    </source>
</evidence>
<evidence type="ECO:0000269" key="8">
    <source>
    </source>
</evidence>
<evidence type="ECO:0000305" key="9"/>
<evidence type="ECO:0000312" key="10">
    <source>
        <dbReference type="RGD" id="1307685"/>
    </source>
</evidence>
<evidence type="ECO:0007744" key="11">
    <source>
    </source>
</evidence>
<keyword id="KW-0007">Acetylation</keyword>
<keyword id="KW-1003">Cell membrane</keyword>
<keyword id="KW-0175">Coiled coil</keyword>
<keyword id="KW-0963">Cytoplasm</keyword>
<keyword id="KW-0903">Direct protein sequencing</keyword>
<keyword id="KW-0256">Endoplasmic reticulum</keyword>
<keyword id="KW-1017">Isopeptide bond</keyword>
<keyword id="KW-0472">Membrane</keyword>
<keyword id="KW-0492">Microsome</keyword>
<keyword id="KW-0496">Mitochondrion</keyword>
<keyword id="KW-0539">Nucleus</keyword>
<keyword id="KW-0597">Phosphoprotein</keyword>
<keyword id="KW-1185">Reference proteome</keyword>
<keyword id="KW-0677">Repeat</keyword>
<keyword id="KW-0694">RNA-binding</keyword>
<keyword id="KW-0699">rRNA-binding</keyword>
<keyword id="KW-0804">Transcription</keyword>
<keyword id="KW-0805">Transcription regulation</keyword>
<keyword id="KW-0806">Transcription termination</keyword>
<keyword id="KW-0832">Ubl conjugation</keyword>
<organism>
    <name type="scientific">Rattus norvegicus</name>
    <name type="common">Rat</name>
    <dbReference type="NCBI Taxonomy" id="10116"/>
    <lineage>
        <taxon>Eukaryota</taxon>
        <taxon>Metazoa</taxon>
        <taxon>Chordata</taxon>
        <taxon>Craniata</taxon>
        <taxon>Vertebrata</taxon>
        <taxon>Euteleostomi</taxon>
        <taxon>Mammalia</taxon>
        <taxon>Eutheria</taxon>
        <taxon>Euarchontoglires</taxon>
        <taxon>Glires</taxon>
        <taxon>Rodentia</taxon>
        <taxon>Myomorpha</taxon>
        <taxon>Muroidea</taxon>
        <taxon>Muridae</taxon>
        <taxon>Murinae</taxon>
        <taxon>Rattus</taxon>
    </lineage>
</organism>